<evidence type="ECO:0000250" key="1"/>
<evidence type="ECO:0000256" key="2">
    <source>
        <dbReference type="SAM" id="MobiDB-lite"/>
    </source>
</evidence>
<evidence type="ECO:0000305" key="3"/>
<dbReference type="EMBL" id="BC127437">
    <property type="protein sequence ID" value="AAI27438.1"/>
    <property type="molecule type" value="mRNA"/>
</dbReference>
<dbReference type="RefSeq" id="NP_001090566.1">
    <property type="nucleotide sequence ID" value="NM_001097097.1"/>
</dbReference>
<dbReference type="SMR" id="A0JPI4"/>
<dbReference type="DNASU" id="100036805"/>
<dbReference type="GeneID" id="100036805"/>
<dbReference type="KEGG" id="xla:100036805"/>
<dbReference type="AGR" id="Xenbase:XB-GENE-1003095"/>
<dbReference type="CTD" id="100036805"/>
<dbReference type="Xenbase" id="XB-GENE-1003095">
    <property type="gene designation" value="golph3l.L"/>
</dbReference>
<dbReference type="OrthoDB" id="9630328at2759"/>
<dbReference type="Proteomes" id="UP000186698">
    <property type="component" value="Chromosome 8L"/>
</dbReference>
<dbReference type="Bgee" id="100036805">
    <property type="expression patterns" value="Expressed in egg cell and 19 other cell types or tissues"/>
</dbReference>
<dbReference type="GO" id="GO:0005829">
    <property type="term" value="C:cytosol"/>
    <property type="evidence" value="ECO:0000318"/>
    <property type="project" value="GO_Central"/>
</dbReference>
<dbReference type="GO" id="GO:0031985">
    <property type="term" value="C:Golgi cisterna"/>
    <property type="evidence" value="ECO:0000250"/>
    <property type="project" value="UniProtKB"/>
</dbReference>
<dbReference type="GO" id="GO:0032580">
    <property type="term" value="C:Golgi cisterna membrane"/>
    <property type="evidence" value="ECO:0007669"/>
    <property type="project" value="UniProtKB-SubCell"/>
</dbReference>
<dbReference type="GO" id="GO:0000139">
    <property type="term" value="C:Golgi membrane"/>
    <property type="evidence" value="ECO:0007669"/>
    <property type="project" value="GOC"/>
</dbReference>
<dbReference type="GO" id="GO:0005802">
    <property type="term" value="C:trans-Golgi network"/>
    <property type="evidence" value="ECO:0000250"/>
    <property type="project" value="UniProtKB"/>
</dbReference>
<dbReference type="GO" id="GO:0070273">
    <property type="term" value="F:phosphatidylinositol-4-phosphate binding"/>
    <property type="evidence" value="ECO:0000250"/>
    <property type="project" value="UniProtKB"/>
</dbReference>
<dbReference type="GO" id="GO:0007030">
    <property type="term" value="P:Golgi organization"/>
    <property type="evidence" value="ECO:0000250"/>
    <property type="project" value="UniProtKB"/>
</dbReference>
<dbReference type="GO" id="GO:0043001">
    <property type="term" value="P:Golgi to plasma membrane protein transport"/>
    <property type="evidence" value="ECO:0000318"/>
    <property type="project" value="GO_Central"/>
</dbReference>
<dbReference type="GO" id="GO:0048194">
    <property type="term" value="P:Golgi vesicle budding"/>
    <property type="evidence" value="ECO:0000318"/>
    <property type="project" value="GO_Central"/>
</dbReference>
<dbReference type="GO" id="GO:0050714">
    <property type="term" value="P:positive regulation of protein secretion"/>
    <property type="evidence" value="ECO:0000250"/>
    <property type="project" value="UniProtKB"/>
</dbReference>
<dbReference type="GO" id="GO:0006890">
    <property type="term" value="P:retrograde vesicle-mediated transport, Golgi to endoplasmic reticulum"/>
    <property type="evidence" value="ECO:0000318"/>
    <property type="project" value="GO_Central"/>
</dbReference>
<dbReference type="FunFam" id="1.10.3630.10:FF:000001">
    <property type="entry name" value="Golgi phosphoprotein 3"/>
    <property type="match status" value="1"/>
</dbReference>
<dbReference type="Gene3D" id="1.10.3630.10">
    <property type="entry name" value="yeast vps74-n-term truncation variant domain like"/>
    <property type="match status" value="1"/>
</dbReference>
<dbReference type="InterPro" id="IPR008628">
    <property type="entry name" value="GPP34-like"/>
</dbReference>
<dbReference type="InterPro" id="IPR038261">
    <property type="entry name" value="GPP34-like_sf"/>
</dbReference>
<dbReference type="PANTHER" id="PTHR12704:SF4">
    <property type="entry name" value="GOLGI PHOSPHOPROTEIN 3-LIKE"/>
    <property type="match status" value="1"/>
</dbReference>
<dbReference type="PANTHER" id="PTHR12704">
    <property type="entry name" value="TRANS-GOLGI PROTEIN GMX33"/>
    <property type="match status" value="1"/>
</dbReference>
<dbReference type="Pfam" id="PF05719">
    <property type="entry name" value="GPP34"/>
    <property type="match status" value="1"/>
</dbReference>
<protein>
    <recommendedName>
        <fullName>Golgi phosphoprotein 3-like B</fullName>
    </recommendedName>
</protein>
<proteinExistence type="evidence at transcript level"/>
<comment type="function">
    <text evidence="1">Phosphatidylinositol-4-phosphate-binding protein that may play a role in the process of vesicle budding at the Golgi and anterograde transport to the plasma membrane.</text>
</comment>
<comment type="subunit">
    <text evidence="1">Homooligomer.</text>
</comment>
<comment type="subcellular location">
    <subcellularLocation>
        <location evidence="1">Golgi apparatus</location>
        <location evidence="1">Golgi stack membrane</location>
        <topology evidence="1">Peripheral membrane protein</topology>
        <orientation evidence="1">Cytoplasmic side</orientation>
    </subcellularLocation>
    <subcellularLocation>
        <location evidence="1">Golgi apparatus</location>
        <location evidence="1">trans-Golgi network membrane</location>
        <topology evidence="1">Peripheral membrane protein</topology>
        <orientation evidence="1">Cytoplasmic side</orientation>
    </subcellularLocation>
    <text evidence="1">Phosphatidylinositol 4-phosphate (PtdIns4P)-binding mediates recruitment to Golgi membranes.</text>
</comment>
<comment type="similarity">
    <text evidence="3">Belongs to the GOLPH3/VPS74 family.</text>
</comment>
<feature type="chain" id="PRO_0000324140" description="Golgi phosphoprotein 3-like B">
    <location>
        <begin position="1"/>
        <end position="280"/>
    </location>
</feature>
<feature type="region of interest" description="Disordered" evidence="2">
    <location>
        <begin position="1"/>
        <end position="32"/>
    </location>
</feature>
<feature type="region of interest" description="Beta-hairpin required for oligomerization" evidence="1">
    <location>
        <begin position="171"/>
        <end position="182"/>
    </location>
</feature>
<feature type="compositionally biased region" description="Basic and acidic residues" evidence="2">
    <location>
        <begin position="10"/>
        <end position="32"/>
    </location>
</feature>
<feature type="binding site" evidence="1">
    <location>
        <position position="62"/>
    </location>
    <ligand>
        <name>a 1,2-diacyl-sn-glycero-3-phospho-(1D-myo-inositol 4-phosphate)</name>
        <dbReference type="ChEBI" id="CHEBI:58178"/>
    </ligand>
</feature>
<feature type="binding site" evidence="1">
    <location>
        <position position="71"/>
    </location>
    <ligand>
        <name>a 1,2-diacyl-sn-glycero-3-phospho-(1D-myo-inositol 4-phosphate)</name>
        <dbReference type="ChEBI" id="CHEBI:58178"/>
    </ligand>
</feature>
<feature type="binding site" evidence="1">
    <location>
        <position position="152"/>
    </location>
    <ligand>
        <name>a 1,2-diacyl-sn-glycero-3-phospho-(1D-myo-inositol 4-phosphate)</name>
        <dbReference type="ChEBI" id="CHEBI:58178"/>
    </ligand>
</feature>
<feature type="binding site" evidence="1">
    <location>
        <position position="155"/>
    </location>
    <ligand>
        <name>a 1,2-diacyl-sn-glycero-3-phospho-(1D-myo-inositol 4-phosphate)</name>
        <dbReference type="ChEBI" id="CHEBI:58178"/>
    </ligand>
</feature>
<sequence length="280" mass="32194">MTTLIRRGRRAEEGQERRADSEDSIKDKDEEDSADSKEIRLTLMEEVLLLGLKDKEGYTSFWNDCISSGLRGGILIELFLRGRVVLEPATIRKKRLTDKKVLLKSDKLTGDVLLDETIKHMKATEPAETVQSWIELLTGETWNPFKLQYQLRNVRERIAKNLVEKGILTTEKQNFLLFDMTTHPVTNTTEKQRLVKKLQESLLEKWVNDPHRMDKRTLALLVLAHSSDVLENAFSSLSDEKYDMAMIRSKELLDLEPDTEGTKPNACEMIWAVLSAFNKS</sequence>
<reference key="1">
    <citation type="submission" date="2006-11" db="EMBL/GenBank/DDBJ databases">
        <authorList>
            <consortium name="NIH - Xenopus Gene Collection (XGC) project"/>
        </authorList>
    </citation>
    <scope>NUCLEOTIDE SEQUENCE [LARGE SCALE MRNA]</scope>
    <source>
        <tissue>Oocyte</tissue>
    </source>
</reference>
<name>GP3LB_XENLA</name>
<keyword id="KW-0333">Golgi apparatus</keyword>
<keyword id="KW-0446">Lipid-binding</keyword>
<keyword id="KW-0472">Membrane</keyword>
<keyword id="KW-1185">Reference proteome</keyword>
<gene>
    <name type="primary">golph3l-b</name>
</gene>
<accession>A0JPI4</accession>
<organism>
    <name type="scientific">Xenopus laevis</name>
    <name type="common">African clawed frog</name>
    <dbReference type="NCBI Taxonomy" id="8355"/>
    <lineage>
        <taxon>Eukaryota</taxon>
        <taxon>Metazoa</taxon>
        <taxon>Chordata</taxon>
        <taxon>Craniata</taxon>
        <taxon>Vertebrata</taxon>
        <taxon>Euteleostomi</taxon>
        <taxon>Amphibia</taxon>
        <taxon>Batrachia</taxon>
        <taxon>Anura</taxon>
        <taxon>Pipoidea</taxon>
        <taxon>Pipidae</taxon>
        <taxon>Xenopodinae</taxon>
        <taxon>Xenopus</taxon>
        <taxon>Xenopus</taxon>
    </lineage>
</organism>